<protein>
    <recommendedName>
        <fullName>Ranacyclin-E</fullName>
    </recommendedName>
</protein>
<organism evidence="3">
    <name type="scientific">Pelophylax lessonae</name>
    <name type="common">Pool frog</name>
    <name type="synonym">Rana lessonae</name>
    <dbReference type="NCBI Taxonomy" id="45623"/>
    <lineage>
        <taxon>Eukaryota</taxon>
        <taxon>Metazoa</taxon>
        <taxon>Chordata</taxon>
        <taxon>Craniata</taxon>
        <taxon>Vertebrata</taxon>
        <taxon>Euteleostomi</taxon>
        <taxon>Amphibia</taxon>
        <taxon>Batrachia</taxon>
        <taxon>Anura</taxon>
        <taxon>Neobatrachia</taxon>
        <taxon>Ranoidea</taxon>
        <taxon>Ranidae</taxon>
        <taxon>Pelophylax</taxon>
    </lineage>
</organism>
<proteinExistence type="evidence at protein level"/>
<sequence length="17" mass="1906">SAPRGCWTKSYPPKPCK</sequence>
<keyword id="KW-0027">Amidation</keyword>
<keyword id="KW-0878">Amphibian defense peptide</keyword>
<keyword id="KW-0044">Antibiotic</keyword>
<keyword id="KW-0929">Antimicrobial</keyword>
<keyword id="KW-0204">Cytolysis</keyword>
<keyword id="KW-0903">Direct protein sequencing</keyword>
<keyword id="KW-1015">Disulfide bond</keyword>
<keyword id="KW-0295">Fungicide</keyword>
<keyword id="KW-0354">Hemolysis</keyword>
<keyword id="KW-0964">Secreted</keyword>
<comment type="function">
    <text evidence="1 2">Has antibacterial activity against Gram-positive bacteria B.megaterium Bm11, S.lentus and M.luteus, Gram-negative bacteria Y.pseudotuberculosis YP III and P.syringae pv tabaci, and antifungal activity against C.tropicalis, C.guiller-mondii and P.nicotianae spores. Has hemolytic activity. The mature peptide inserts into the hydrophobic core of the bacterial cell membrane and increases permeability without disrupting membrane integrity. Probably binds to the outer membrane surface before aggregating to form transmembrane pores.</text>
</comment>
<comment type="subcellular location">
    <subcellularLocation>
        <location evidence="1">Secreted</location>
    </subcellularLocation>
</comment>
<comment type="tissue specificity">
    <text evidence="1">Expressed by the skin granular glands.</text>
</comment>
<comment type="similarity">
    <text evidence="3">Belongs to the frog skin active peptide (FSAP) family. Brevinin subfamily.</text>
</comment>
<name>RACYE_PELLE</name>
<evidence type="ECO:0000269" key="1">
    <source>
    </source>
</evidence>
<evidence type="ECO:0000303" key="2">
    <source>
    </source>
</evidence>
<evidence type="ECO:0000305" key="3"/>
<accession>P83663</accession>
<reference evidence="3" key="1">
    <citation type="journal article" date="2003" name="Biochemistry">
        <title>Ranacyclins, a new family of short cyclic antimicrobial peptides: biological function, mode of action and parameters involved in target specificity.</title>
        <authorList>
            <person name="Mangoni M.L."/>
            <person name="Papo N."/>
            <person name="Mignogna G."/>
            <person name="Andreu D."/>
            <person name="Shai Y."/>
            <person name="Barra D."/>
            <person name="Simmaco M."/>
        </authorList>
    </citation>
    <scope>PROTEIN SEQUENCE</scope>
    <scope>FUNCTION</scope>
    <scope>SUBCELLULAR LOCATION</scope>
    <scope>TISSUE SPECIFICITY</scope>
    <scope>DISULFIDE BOND</scope>
    <scope>AMIDATION AT LYS-17</scope>
    <source>
        <tissue evidence="1">Skin</tissue>
    </source>
</reference>
<dbReference type="BMRB" id="P83663"/>
<dbReference type="GO" id="GO:0005576">
    <property type="term" value="C:extracellular region"/>
    <property type="evidence" value="ECO:0000314"/>
    <property type="project" value="UniProtKB"/>
</dbReference>
<dbReference type="GO" id="GO:0050832">
    <property type="term" value="P:defense response to fungus"/>
    <property type="evidence" value="ECO:0000314"/>
    <property type="project" value="UniProtKB"/>
</dbReference>
<dbReference type="GO" id="GO:0050829">
    <property type="term" value="P:defense response to Gram-negative bacterium"/>
    <property type="evidence" value="ECO:0000314"/>
    <property type="project" value="UniProtKB"/>
</dbReference>
<dbReference type="GO" id="GO:0050830">
    <property type="term" value="P:defense response to Gram-positive bacterium"/>
    <property type="evidence" value="ECO:0000314"/>
    <property type="project" value="UniProtKB"/>
</dbReference>
<dbReference type="GO" id="GO:0031640">
    <property type="term" value="P:killing of cells of another organism"/>
    <property type="evidence" value="ECO:0007669"/>
    <property type="project" value="UniProtKB-KW"/>
</dbReference>
<dbReference type="InterPro" id="IPR032019">
    <property type="entry name" value="Frog_antimicrobial_Ranidae"/>
</dbReference>
<dbReference type="Pfam" id="PF16048">
    <property type="entry name" value="Antimicrobial23"/>
    <property type="match status" value="1"/>
</dbReference>
<feature type="peptide" id="PRO_0000043555" description="Ranacyclin-E">
    <location>
        <begin position="1"/>
        <end position="17"/>
    </location>
</feature>
<feature type="modified residue" description="Lysine amide" evidence="1">
    <location>
        <position position="17"/>
    </location>
</feature>
<feature type="disulfide bond" evidence="1">
    <location>
        <begin position="6"/>
        <end position="16"/>
    </location>
</feature>